<comment type="function">
    <text>DNA repair enzyme that incises DNA at 8-oxoG residues. Excises 7,8-dihydro-8-oxoguanine and 2,6-diamino-4-hydroxy-5-N-methylformamidopyrimidine (FAPY) from damaged DNA. Has a beta-lyase activity that nicks DNA 3' to the lesion.</text>
</comment>
<comment type="catalytic activity">
    <reaction>
        <text>2'-deoxyribonucleotide-(2'-deoxyribose 5'-phosphate)-2'-deoxyribonucleotide-DNA = a 3'-end 2'-deoxyribonucleotide-(2,3-dehydro-2,3-deoxyribose 5'-phosphate)-DNA + a 5'-end 5'-phospho-2'-deoxyribonucleoside-DNA + H(+)</text>
        <dbReference type="Rhea" id="RHEA:66592"/>
        <dbReference type="Rhea" id="RHEA-COMP:13180"/>
        <dbReference type="Rhea" id="RHEA-COMP:16897"/>
        <dbReference type="Rhea" id="RHEA-COMP:17067"/>
        <dbReference type="ChEBI" id="CHEBI:15378"/>
        <dbReference type="ChEBI" id="CHEBI:136412"/>
        <dbReference type="ChEBI" id="CHEBI:157695"/>
        <dbReference type="ChEBI" id="CHEBI:167181"/>
        <dbReference type="EC" id="4.2.99.18"/>
    </reaction>
</comment>
<comment type="subcellular location">
    <subcellularLocation>
        <location>Nucleus</location>
    </subcellularLocation>
</comment>
<comment type="miscellaneous">
    <text evidence="3">Present with 3690 molecules/cell in log phase SD medium.</text>
</comment>
<comment type="similarity">
    <text evidence="5">Belongs to the type-1 OGG1 family.</text>
</comment>
<protein>
    <recommendedName>
        <fullName>N-glycosylase/DNA lyase</fullName>
    </recommendedName>
    <domain>
        <recommendedName>
            <fullName>8-oxoguanine DNA glycosylase</fullName>
            <ecNumber>3.2.2.-</ecNumber>
        </recommendedName>
    </domain>
    <domain>
        <recommendedName>
            <fullName>DNA-(apurinic or apyrimidinic site) lyase</fullName>
            <shortName>AP lyase</shortName>
            <ecNumber>4.2.99.18</ecNumber>
        </recommendedName>
    </domain>
</protein>
<gene>
    <name type="primary">OGG1</name>
    <name type="ordered locus">YML060W</name>
    <name type="ORF">YM9958.02</name>
</gene>
<dbReference type="EC" id="3.2.2.-"/>
<dbReference type="EC" id="4.2.99.18"/>
<dbReference type="EMBL" id="U44855">
    <property type="protein sequence ID" value="AAC49312.1"/>
    <property type="molecule type" value="Genomic_DNA"/>
</dbReference>
<dbReference type="EMBL" id="Z46729">
    <property type="protein sequence ID" value="CAA86715.1"/>
    <property type="molecule type" value="Genomic_DNA"/>
</dbReference>
<dbReference type="EMBL" id="BK006946">
    <property type="protein sequence ID" value="DAA09837.1"/>
    <property type="molecule type" value="Genomic_DNA"/>
</dbReference>
<dbReference type="PIR" id="S49801">
    <property type="entry name" value="S49801"/>
</dbReference>
<dbReference type="RefSeq" id="NP_013651.1">
    <property type="nucleotide sequence ID" value="NM_001182419.1"/>
</dbReference>
<dbReference type="SMR" id="P53397"/>
<dbReference type="BioGRID" id="35106">
    <property type="interactions" value="92"/>
</dbReference>
<dbReference type="DIP" id="DIP-4538N"/>
<dbReference type="FunCoup" id="P53397">
    <property type="interactions" value="695"/>
</dbReference>
<dbReference type="IntAct" id="P53397">
    <property type="interactions" value="1"/>
</dbReference>
<dbReference type="MINT" id="P53397"/>
<dbReference type="STRING" id="4932.YML060W"/>
<dbReference type="CarbonylDB" id="P53397"/>
<dbReference type="iPTMnet" id="P53397"/>
<dbReference type="PaxDb" id="4932-YML060W"/>
<dbReference type="PeptideAtlas" id="P53397"/>
<dbReference type="TopDownProteomics" id="P53397"/>
<dbReference type="EnsemblFungi" id="YML060W_mRNA">
    <property type="protein sequence ID" value="YML060W"/>
    <property type="gene ID" value="YML060W"/>
</dbReference>
<dbReference type="GeneID" id="854942"/>
<dbReference type="KEGG" id="sce:YML060W"/>
<dbReference type="AGR" id="SGD:S000004525"/>
<dbReference type="SGD" id="S000004525">
    <property type="gene designation" value="OGG1"/>
</dbReference>
<dbReference type="VEuPathDB" id="FungiDB:YML060W"/>
<dbReference type="eggNOG" id="KOG2875">
    <property type="taxonomic scope" value="Eukaryota"/>
</dbReference>
<dbReference type="GeneTree" id="ENSGT00640000091554"/>
<dbReference type="HOGENOM" id="CLU_027543_3_1_1"/>
<dbReference type="InParanoid" id="P53397"/>
<dbReference type="OMA" id="ITKMCHS"/>
<dbReference type="OrthoDB" id="238681at2759"/>
<dbReference type="BioCyc" id="YEAST:G3O-32655-MONOMER"/>
<dbReference type="Reactome" id="R-SCE-110329">
    <property type="pathway name" value="Cleavage of the damaged pyrimidine"/>
</dbReference>
<dbReference type="Reactome" id="R-SCE-110330">
    <property type="pathway name" value="Recognition and association of DNA glycosylase with site containing an affected purine"/>
</dbReference>
<dbReference type="Reactome" id="R-SCE-110331">
    <property type="pathway name" value="Cleavage of the damaged purine"/>
</dbReference>
<dbReference type="BioGRID-ORCS" id="854942">
    <property type="hits" value="3 hits in 10 CRISPR screens"/>
</dbReference>
<dbReference type="PRO" id="PR:P53397"/>
<dbReference type="Proteomes" id="UP000002311">
    <property type="component" value="Chromosome XIII"/>
</dbReference>
<dbReference type="RNAct" id="P53397">
    <property type="molecule type" value="protein"/>
</dbReference>
<dbReference type="GO" id="GO:0005739">
    <property type="term" value="C:mitochondrion"/>
    <property type="evidence" value="ECO:0000314"/>
    <property type="project" value="SGD"/>
</dbReference>
<dbReference type="GO" id="GO:0005634">
    <property type="term" value="C:nucleus"/>
    <property type="evidence" value="ECO:0000314"/>
    <property type="project" value="SGD"/>
</dbReference>
<dbReference type="GO" id="GO:0034039">
    <property type="term" value="F:8-oxo-7,8-dihydroguanine DNA N-glycosylase activity"/>
    <property type="evidence" value="ECO:0000318"/>
    <property type="project" value="GO_Central"/>
</dbReference>
<dbReference type="GO" id="GO:0140078">
    <property type="term" value="F:class I DNA-(apurinic or apyrimidinic site) endonuclease activity"/>
    <property type="evidence" value="ECO:0007669"/>
    <property type="project" value="UniProtKB-EC"/>
</dbReference>
<dbReference type="GO" id="GO:0003684">
    <property type="term" value="F:damaged DNA binding"/>
    <property type="evidence" value="ECO:0007669"/>
    <property type="project" value="InterPro"/>
</dbReference>
<dbReference type="GO" id="GO:0008534">
    <property type="term" value="F:oxidized purine nucleobase lesion DNA N-glycosylase activity"/>
    <property type="evidence" value="ECO:0000314"/>
    <property type="project" value="SGD"/>
</dbReference>
<dbReference type="GO" id="GO:0006285">
    <property type="term" value="P:base-excision repair, AP site formation"/>
    <property type="evidence" value="ECO:0000314"/>
    <property type="project" value="SGD"/>
</dbReference>
<dbReference type="GO" id="GO:0006281">
    <property type="term" value="P:DNA repair"/>
    <property type="evidence" value="ECO:0000315"/>
    <property type="project" value="SGD"/>
</dbReference>
<dbReference type="GO" id="GO:0070987">
    <property type="term" value="P:error-free translesion synthesis"/>
    <property type="evidence" value="ECO:0000316"/>
    <property type="project" value="SGD"/>
</dbReference>
<dbReference type="GO" id="GO:0006289">
    <property type="term" value="P:nucleotide-excision repair"/>
    <property type="evidence" value="ECO:0007669"/>
    <property type="project" value="InterPro"/>
</dbReference>
<dbReference type="GO" id="GO:0007004">
    <property type="term" value="P:telomere maintenance via telomerase"/>
    <property type="evidence" value="ECO:0000315"/>
    <property type="project" value="SGD"/>
</dbReference>
<dbReference type="CDD" id="cd00056">
    <property type="entry name" value="ENDO3c"/>
    <property type="match status" value="1"/>
</dbReference>
<dbReference type="FunFam" id="1.10.340.30:FF:000006">
    <property type="entry name" value="N-glycosylase/DNA lyase isoform X2"/>
    <property type="match status" value="1"/>
</dbReference>
<dbReference type="FunFam" id="1.10.1670.10:FF:000025">
    <property type="entry name" value="Ogg1p"/>
    <property type="match status" value="1"/>
</dbReference>
<dbReference type="Gene3D" id="3.30.310.40">
    <property type="match status" value="1"/>
</dbReference>
<dbReference type="Gene3D" id="1.10.1670.10">
    <property type="entry name" value="Helix-hairpin-Helix base-excision DNA repair enzymes (C-terminal)"/>
    <property type="match status" value="1"/>
</dbReference>
<dbReference type="Gene3D" id="1.10.340.30">
    <property type="entry name" value="Hypothetical protein, domain 2"/>
    <property type="match status" value="1"/>
</dbReference>
<dbReference type="InterPro" id="IPR011257">
    <property type="entry name" value="DNA_glycosylase"/>
</dbReference>
<dbReference type="InterPro" id="IPR003265">
    <property type="entry name" value="HhH-GPD_domain"/>
</dbReference>
<dbReference type="InterPro" id="IPR023170">
    <property type="entry name" value="HhH_base_excis_C"/>
</dbReference>
<dbReference type="InterPro" id="IPR004577">
    <property type="entry name" value="Ogg1"/>
</dbReference>
<dbReference type="InterPro" id="IPR012904">
    <property type="entry name" value="OGG_N"/>
</dbReference>
<dbReference type="InterPro" id="IPR052054">
    <property type="entry name" value="Oxidative_DNA_repair_enzyme"/>
</dbReference>
<dbReference type="NCBIfam" id="TIGR00588">
    <property type="entry name" value="ogg"/>
    <property type="match status" value="1"/>
</dbReference>
<dbReference type="PANTHER" id="PTHR10242">
    <property type="entry name" value="8-OXOGUANINE DNA GLYCOSYLASE"/>
    <property type="match status" value="1"/>
</dbReference>
<dbReference type="PANTHER" id="PTHR10242:SF2">
    <property type="entry name" value="N-GLYCOSYLASE_DNA LYASE"/>
    <property type="match status" value="1"/>
</dbReference>
<dbReference type="Pfam" id="PF00730">
    <property type="entry name" value="HhH-GPD"/>
    <property type="match status" value="1"/>
</dbReference>
<dbReference type="Pfam" id="PF07934">
    <property type="entry name" value="OGG_N"/>
    <property type="match status" value="1"/>
</dbReference>
<dbReference type="SMART" id="SM00478">
    <property type="entry name" value="ENDO3c"/>
    <property type="match status" value="1"/>
</dbReference>
<dbReference type="SUPFAM" id="SSF48150">
    <property type="entry name" value="DNA-glycosylase"/>
    <property type="match status" value="1"/>
</dbReference>
<dbReference type="SUPFAM" id="SSF55945">
    <property type="entry name" value="TATA-box binding protein-like"/>
    <property type="match status" value="1"/>
</dbReference>
<feature type="chain" id="PRO_0000058595" description="N-glycosylase/DNA lyase">
    <location>
        <begin position="1"/>
        <end position="376"/>
    </location>
</feature>
<feature type="active site" description="Schiff-base intermediate with DNA">
    <location>
        <position position="241"/>
    </location>
</feature>
<feature type="binding site" evidence="1">
    <location>
        <position position="134"/>
    </location>
    <ligand>
        <name>DNA</name>
        <dbReference type="ChEBI" id="CHEBI:16991"/>
    </ligand>
</feature>
<feature type="binding site" evidence="1">
    <location>
        <position position="139"/>
    </location>
    <ligand>
        <name>DNA</name>
        <dbReference type="ChEBI" id="CHEBI:16991"/>
    </ligand>
</feature>
<feature type="binding site" evidence="1">
    <location>
        <position position="189"/>
    </location>
    <ligand>
        <name>DNA</name>
        <dbReference type="ChEBI" id="CHEBI:16991"/>
    </ligand>
</feature>
<feature type="binding site" evidence="1">
    <location>
        <position position="258"/>
    </location>
    <ligand>
        <name>8-oxoguanine</name>
        <dbReference type="ChEBI" id="CHEBI:52617"/>
    </ligand>
</feature>
<feature type="binding site" evidence="1">
    <location>
        <position position="260"/>
    </location>
    <ligand>
        <name>8-oxoguanine</name>
        <dbReference type="ChEBI" id="CHEBI:52617"/>
    </ligand>
</feature>
<feature type="binding site" evidence="1">
    <location>
        <position position="262"/>
    </location>
    <ligand>
        <name>DNA</name>
        <dbReference type="ChEBI" id="CHEBI:16991"/>
    </ligand>
</feature>
<feature type="binding site" evidence="1">
    <location>
        <position position="320"/>
    </location>
    <ligand>
        <name>8-oxoguanine</name>
        <dbReference type="ChEBI" id="CHEBI:52617"/>
    </ligand>
</feature>
<feature type="binding site" evidence="1">
    <location>
        <position position="324"/>
    </location>
    <ligand>
        <name>8-oxoguanine</name>
        <dbReference type="ChEBI" id="CHEBI:52617"/>
    </ligand>
</feature>
<feature type="mutagenesis site" description="Abolishes both DNA glycosylase and AP lyase activity." evidence="2 4">
    <original>K</original>
    <variation>Q</variation>
    <location>
        <position position="241"/>
    </location>
</feature>
<feature type="mutagenesis site" description="Diminishes both DNA glycosylase and AP lyase activity." evidence="2 4">
    <original>K</original>
    <variation>R</variation>
    <location>
        <position position="241"/>
    </location>
</feature>
<evidence type="ECO:0000250" key="1"/>
<evidence type="ECO:0000269" key="2">
    <source>
    </source>
</evidence>
<evidence type="ECO:0000269" key="3">
    <source>
    </source>
</evidence>
<evidence type="ECO:0000269" key="4">
    <source>
    </source>
</evidence>
<evidence type="ECO:0000305" key="5"/>
<accession>P53397</accession>
<accession>D6VZB3</accession>
<name>OGG1_YEAST</name>
<keyword id="KW-0227">DNA damage</keyword>
<keyword id="KW-0234">DNA repair</keyword>
<keyword id="KW-0326">Glycosidase</keyword>
<keyword id="KW-0378">Hydrolase</keyword>
<keyword id="KW-0456">Lyase</keyword>
<keyword id="KW-0511">Multifunctional enzyme</keyword>
<keyword id="KW-0539">Nucleus</keyword>
<keyword id="KW-1185">Reference proteome</keyword>
<proteinExistence type="evidence at protein level"/>
<reference key="1">
    <citation type="journal article" date="1996" name="Proc. Natl. Acad. Sci. U.S.A.">
        <title>Cloning and expression in Escherichia coli of the OGG1 gene of Saccharomyces cerevisiae, which codes for a DNA glycosylase that excises 7,8-dihydro-8-oxoguanine and 2,6-diamino-4-hydroxy-5-N-methylformamidopyrimidine.</title>
        <authorList>
            <person name="van der Kemp P.A."/>
            <person name="Thomas D."/>
            <person name="Barbey R."/>
            <person name="de Oliveira R."/>
            <person name="Boiteux S."/>
        </authorList>
    </citation>
    <scope>NUCLEOTIDE SEQUENCE [GENOMIC DNA]</scope>
    <source>
        <strain>ATCC 28383 / FL100 / VTT C-80102</strain>
    </source>
</reference>
<reference key="2">
    <citation type="journal article" date="1997" name="Nature">
        <title>The nucleotide sequence of Saccharomyces cerevisiae chromosome XIII.</title>
        <authorList>
            <person name="Bowman S."/>
            <person name="Churcher C.M."/>
            <person name="Badcock K."/>
            <person name="Brown D."/>
            <person name="Chillingworth T."/>
            <person name="Connor R."/>
            <person name="Dedman K."/>
            <person name="Devlin K."/>
            <person name="Gentles S."/>
            <person name="Hamlin N."/>
            <person name="Hunt S."/>
            <person name="Jagels K."/>
            <person name="Lye G."/>
            <person name="Moule S."/>
            <person name="Odell C."/>
            <person name="Pearson D."/>
            <person name="Rajandream M.A."/>
            <person name="Rice P."/>
            <person name="Skelton J."/>
            <person name="Walsh S.V."/>
            <person name="Whitehead S."/>
            <person name="Barrell B.G."/>
        </authorList>
    </citation>
    <scope>NUCLEOTIDE SEQUENCE [LARGE SCALE GENOMIC DNA]</scope>
    <source>
        <strain>ATCC 204508 / S288c</strain>
    </source>
</reference>
<reference key="3">
    <citation type="journal article" date="2014" name="G3 (Bethesda)">
        <title>The reference genome sequence of Saccharomyces cerevisiae: Then and now.</title>
        <authorList>
            <person name="Engel S.R."/>
            <person name="Dietrich F.S."/>
            <person name="Fisk D.G."/>
            <person name="Binkley G."/>
            <person name="Balakrishnan R."/>
            <person name="Costanzo M.C."/>
            <person name="Dwight S.S."/>
            <person name="Hitz B.C."/>
            <person name="Karra K."/>
            <person name="Nash R.S."/>
            <person name="Weng S."/>
            <person name="Wong E.D."/>
            <person name="Lloyd P."/>
            <person name="Skrzypek M.S."/>
            <person name="Miyasato S.R."/>
            <person name="Simison M."/>
            <person name="Cherry J.M."/>
        </authorList>
    </citation>
    <scope>GENOME REANNOTATION</scope>
    <source>
        <strain>ATCC 204508 / S288c</strain>
    </source>
</reference>
<reference key="4">
    <citation type="journal article" date="1997" name="Nucleic Acids Res.">
        <title>The Ogg1 protein of Saccharomyces cerevisiae: a 7,8-dihydro-8-oxoguanine DNA glycosylase/AP lyase whose lysine 241 is a critical residue for catalytic activity.</title>
        <authorList>
            <person name="Girard P.-M."/>
            <person name="Guibourt N."/>
            <person name="Boiteux S."/>
        </authorList>
    </citation>
    <scope>CHARACTERIZATION</scope>
    <scope>MUTAGENESIS OF LYS-241</scope>
</reference>
<reference key="5">
    <citation type="journal article" date="2000" name="Biochemistry">
        <title>Catalytic and DNA binding properties of the ogg1 protein of Saccharomyces cerevisiae: comparison between the wild type and the K241R and K241Q active-site mutant proteins.</title>
        <authorList>
            <person name="Guibourt N."/>
            <person name="Castaing B."/>
            <person name="Van Der Kemp P.A."/>
            <person name="Boiteux S."/>
        </authorList>
    </citation>
    <scope>CHARACTERIZATION</scope>
    <scope>MUTAGENESIS OF LYS-241</scope>
</reference>
<reference key="6">
    <citation type="journal article" date="2003" name="Nature">
        <title>Global analysis of protein expression in yeast.</title>
        <authorList>
            <person name="Ghaemmaghami S."/>
            <person name="Huh W.-K."/>
            <person name="Bower K."/>
            <person name="Howson R.W."/>
            <person name="Belle A."/>
            <person name="Dephoure N."/>
            <person name="O'Shea E.K."/>
            <person name="Weissman J.S."/>
        </authorList>
    </citation>
    <scope>LEVEL OF PROTEIN EXPRESSION [LARGE SCALE ANALYSIS]</scope>
</reference>
<organism>
    <name type="scientific">Saccharomyces cerevisiae (strain ATCC 204508 / S288c)</name>
    <name type="common">Baker's yeast</name>
    <dbReference type="NCBI Taxonomy" id="559292"/>
    <lineage>
        <taxon>Eukaryota</taxon>
        <taxon>Fungi</taxon>
        <taxon>Dikarya</taxon>
        <taxon>Ascomycota</taxon>
        <taxon>Saccharomycotina</taxon>
        <taxon>Saccharomycetes</taxon>
        <taxon>Saccharomycetales</taxon>
        <taxon>Saccharomycetaceae</taxon>
        <taxon>Saccharomyces</taxon>
    </lineage>
</organism>
<sequence>MSYKFGKLAINKSELCLANVLQAGQSFRWIWDEKLNQYSTTMKIGQQEKYSVVILRQDEENEILEFVAVGDCGNQDALKTHLMKYFRLDVSLKHLFDNVWIPSDKAFAKLSPQGIRILAQEPWETLISFICSSNNNISRITRMCNSLCSNFGNLITTIDGVAYHSFPTSEELTSRATEAKLRELGFGYRAKYIIETARKLVNDKAEANITSDTTYLQSICKDAQYEDVREHLMSYNGVGPKVADCVCLMGLHMDGIVPVDVHVSRIAKRDYQISANKNHLKELRTKYNALPISRKKINLELDHIRLMLFKKWGSYAGWAQGVLFSKEIGGTSGSTTTGTIKKRKWDMIKETEAIVTKQMKLKVELSDLHIKEAKID</sequence>